<dbReference type="EMBL" id="CH473968">
    <property type="protein sequence ID" value="EDL81292.1"/>
    <property type="molecule type" value="Genomic_DNA"/>
</dbReference>
<dbReference type="RefSeq" id="NP_001102168.1">
    <property type="nucleotide sequence ID" value="NM_001108698.1"/>
</dbReference>
<dbReference type="SMR" id="D4AAA5"/>
<dbReference type="FunCoup" id="D4AAA5">
    <property type="interactions" value="414"/>
</dbReference>
<dbReference type="STRING" id="10116.ENSRNOP00000052229"/>
<dbReference type="PaxDb" id="10116-ENSRNOP00000052229"/>
<dbReference type="Ensembl" id="ENSRNOT00000055361.4">
    <property type="protein sequence ID" value="ENSRNOP00000052229.2"/>
    <property type="gene ID" value="ENSRNOG00000036876.4"/>
</dbReference>
<dbReference type="GeneID" id="362678"/>
<dbReference type="KEGG" id="rno:362678"/>
<dbReference type="AGR" id="RGD:1308923"/>
<dbReference type="CTD" id="199990"/>
<dbReference type="RGD" id="1308923">
    <property type="gene designation" value="Faap20"/>
</dbReference>
<dbReference type="eggNOG" id="ENOG502SE5R">
    <property type="taxonomic scope" value="Eukaryota"/>
</dbReference>
<dbReference type="GeneTree" id="ENSGT00390000010531"/>
<dbReference type="HOGENOM" id="CLU_122192_0_0_1"/>
<dbReference type="InParanoid" id="D4AAA5"/>
<dbReference type="OMA" id="GECARLW"/>
<dbReference type="PhylomeDB" id="D4AAA5"/>
<dbReference type="TreeFam" id="TF336358"/>
<dbReference type="Reactome" id="R-RNO-6783310">
    <property type="pathway name" value="Fanconi Anemia Pathway"/>
</dbReference>
<dbReference type="Reactome" id="R-RNO-9833482">
    <property type="pathway name" value="PKR-mediated signaling"/>
</dbReference>
<dbReference type="PRO" id="PR:D4AAA5"/>
<dbReference type="Proteomes" id="UP000002494">
    <property type="component" value="Chromosome 5"/>
</dbReference>
<dbReference type="Proteomes" id="UP000234681">
    <property type="component" value="Chromosome 5"/>
</dbReference>
<dbReference type="Bgee" id="ENSRNOG00000036876">
    <property type="expression patterns" value="Expressed in pancreas and 19 other cell types or tissues"/>
</dbReference>
<dbReference type="GO" id="GO:0000785">
    <property type="term" value="C:chromatin"/>
    <property type="evidence" value="ECO:0000266"/>
    <property type="project" value="RGD"/>
</dbReference>
<dbReference type="GO" id="GO:0005694">
    <property type="term" value="C:chromosome"/>
    <property type="evidence" value="ECO:0000250"/>
    <property type="project" value="UniProtKB"/>
</dbReference>
<dbReference type="GO" id="GO:0043240">
    <property type="term" value="C:Fanconi anaemia nuclear complex"/>
    <property type="evidence" value="ECO:0000250"/>
    <property type="project" value="UniProtKB"/>
</dbReference>
<dbReference type="GO" id="GO:0070530">
    <property type="term" value="F:K63-linked polyubiquitin modification-dependent protein binding"/>
    <property type="evidence" value="ECO:0000250"/>
    <property type="project" value="UniProtKB"/>
</dbReference>
<dbReference type="GO" id="GO:0031593">
    <property type="term" value="F:polyubiquitin modification-dependent protein binding"/>
    <property type="evidence" value="ECO:0000250"/>
    <property type="project" value="UniProtKB"/>
</dbReference>
<dbReference type="GO" id="GO:0043130">
    <property type="term" value="F:ubiquitin binding"/>
    <property type="evidence" value="ECO:0007669"/>
    <property type="project" value="InterPro"/>
</dbReference>
<dbReference type="GO" id="GO:0140036">
    <property type="term" value="F:ubiquitin-modified protein reader activity"/>
    <property type="evidence" value="ECO:0000250"/>
    <property type="project" value="UniProtKB"/>
</dbReference>
<dbReference type="GO" id="GO:0008270">
    <property type="term" value="F:zinc ion binding"/>
    <property type="evidence" value="ECO:0007669"/>
    <property type="project" value="UniProtKB-KW"/>
</dbReference>
<dbReference type="GO" id="GO:0006974">
    <property type="term" value="P:DNA damage response"/>
    <property type="evidence" value="ECO:0000250"/>
    <property type="project" value="UniProtKB"/>
</dbReference>
<dbReference type="GO" id="GO:0036297">
    <property type="term" value="P:interstrand cross-link repair"/>
    <property type="evidence" value="ECO:0000250"/>
    <property type="project" value="UniProtKB"/>
</dbReference>
<dbReference type="GO" id="GO:0019985">
    <property type="term" value="P:translesion synthesis"/>
    <property type="evidence" value="ECO:0000250"/>
    <property type="project" value="UniProtKB"/>
</dbReference>
<dbReference type="InterPro" id="IPR052689">
    <property type="entry name" value="FA_core_complex_assoc"/>
</dbReference>
<dbReference type="InterPro" id="IPR031491">
    <property type="entry name" value="FANCA_interact"/>
</dbReference>
<dbReference type="InterPro" id="IPR031490">
    <property type="entry name" value="UBZ2_FAAP20"/>
</dbReference>
<dbReference type="PANTHER" id="PTHR37862">
    <property type="entry name" value="FANCONI ANEMIA CORE COMPLEX-ASSOCIATED PROTEIN 20"/>
    <property type="match status" value="1"/>
</dbReference>
<dbReference type="PANTHER" id="PTHR37862:SF1">
    <property type="entry name" value="FANCONI ANEMIA CORE COMPLEX-ASSOCIATED PROTEIN 20"/>
    <property type="match status" value="1"/>
</dbReference>
<dbReference type="Pfam" id="PF15751">
    <property type="entry name" value="FANCA_interact"/>
    <property type="match status" value="1"/>
</dbReference>
<dbReference type="Pfam" id="PF15750">
    <property type="entry name" value="UBZ_FAAP20"/>
    <property type="match status" value="1"/>
</dbReference>
<dbReference type="PROSITE" id="PS51906">
    <property type="entry name" value="ZF_UBZ2"/>
    <property type="match status" value="1"/>
</dbReference>
<protein>
    <recommendedName>
        <fullName evidence="2">Fanconi anemia core complex-associated protein 20</fullName>
    </recommendedName>
    <alternativeName>
        <fullName evidence="2">FANCA-associated protein of 20 kDa</fullName>
    </alternativeName>
    <alternativeName>
        <fullName evidence="2">Fanconi anemia-associated protein of 20 kDa</fullName>
    </alternativeName>
</protein>
<evidence type="ECO:0000250" key="1"/>
<evidence type="ECO:0000250" key="2">
    <source>
        <dbReference type="UniProtKB" id="Q6NZ36"/>
    </source>
</evidence>
<evidence type="ECO:0000255" key="3">
    <source>
        <dbReference type="PROSITE-ProRule" id="PRU01254"/>
    </source>
</evidence>
<evidence type="ECO:0000256" key="4">
    <source>
        <dbReference type="SAM" id="MobiDB-lite"/>
    </source>
</evidence>
<keyword id="KW-0158">Chromosome</keyword>
<keyword id="KW-0227">DNA damage</keyword>
<keyword id="KW-0234">DNA repair</keyword>
<keyword id="KW-0479">Metal-binding</keyword>
<keyword id="KW-0539">Nucleus</keyword>
<keyword id="KW-0597">Phosphoprotein</keyword>
<keyword id="KW-1185">Reference proteome</keyword>
<keyword id="KW-0862">Zinc</keyword>
<keyword id="KW-0863">Zinc-finger</keyword>
<accession>D4AAA5</accession>
<reference key="1">
    <citation type="journal article" date="2004" name="Nature">
        <title>Genome sequence of the Brown Norway rat yields insights into mammalian evolution.</title>
        <authorList>
            <person name="Gibbs R.A."/>
            <person name="Weinstock G.M."/>
            <person name="Metzker M.L."/>
            <person name="Muzny D.M."/>
            <person name="Sodergren E.J."/>
            <person name="Scherer S."/>
            <person name="Scott G."/>
            <person name="Steffen D."/>
            <person name="Worley K.C."/>
            <person name="Burch P.E."/>
            <person name="Okwuonu G."/>
            <person name="Hines S."/>
            <person name="Lewis L."/>
            <person name="Deramo C."/>
            <person name="Delgado O."/>
            <person name="Dugan-Rocha S."/>
            <person name="Miner G."/>
            <person name="Morgan M."/>
            <person name="Hawes A."/>
            <person name="Gill R."/>
            <person name="Holt R.A."/>
            <person name="Adams M.D."/>
            <person name="Amanatides P.G."/>
            <person name="Baden-Tillson H."/>
            <person name="Barnstead M."/>
            <person name="Chin S."/>
            <person name="Evans C.A."/>
            <person name="Ferriera S."/>
            <person name="Fosler C."/>
            <person name="Glodek A."/>
            <person name="Gu Z."/>
            <person name="Jennings D."/>
            <person name="Kraft C.L."/>
            <person name="Nguyen T."/>
            <person name="Pfannkoch C.M."/>
            <person name="Sitter C."/>
            <person name="Sutton G.G."/>
            <person name="Venter J.C."/>
            <person name="Woodage T."/>
            <person name="Smith D."/>
            <person name="Lee H.-M."/>
            <person name="Gustafson E."/>
            <person name="Cahill P."/>
            <person name="Kana A."/>
            <person name="Doucette-Stamm L."/>
            <person name="Weinstock K."/>
            <person name="Fechtel K."/>
            <person name="Weiss R.B."/>
            <person name="Dunn D.M."/>
            <person name="Green E.D."/>
            <person name="Blakesley R.W."/>
            <person name="Bouffard G.G."/>
            <person name="De Jong P.J."/>
            <person name="Osoegawa K."/>
            <person name="Zhu B."/>
            <person name="Marra M."/>
            <person name="Schein J."/>
            <person name="Bosdet I."/>
            <person name="Fjell C."/>
            <person name="Jones S."/>
            <person name="Krzywinski M."/>
            <person name="Mathewson C."/>
            <person name="Siddiqui A."/>
            <person name="Wye N."/>
            <person name="McPherson J."/>
            <person name="Zhao S."/>
            <person name="Fraser C.M."/>
            <person name="Shetty J."/>
            <person name="Shatsman S."/>
            <person name="Geer K."/>
            <person name="Chen Y."/>
            <person name="Abramzon S."/>
            <person name="Nierman W.C."/>
            <person name="Havlak P.H."/>
            <person name="Chen R."/>
            <person name="Durbin K.J."/>
            <person name="Egan A."/>
            <person name="Ren Y."/>
            <person name="Song X.-Z."/>
            <person name="Li B."/>
            <person name="Liu Y."/>
            <person name="Qin X."/>
            <person name="Cawley S."/>
            <person name="Cooney A.J."/>
            <person name="D'Souza L.M."/>
            <person name="Martin K."/>
            <person name="Wu J.Q."/>
            <person name="Gonzalez-Garay M.L."/>
            <person name="Jackson A.R."/>
            <person name="Kalafus K.J."/>
            <person name="McLeod M.P."/>
            <person name="Milosavljevic A."/>
            <person name="Virk D."/>
            <person name="Volkov A."/>
            <person name="Wheeler D.A."/>
            <person name="Zhang Z."/>
            <person name="Bailey J.A."/>
            <person name="Eichler E.E."/>
            <person name="Tuzun E."/>
            <person name="Birney E."/>
            <person name="Mongin E."/>
            <person name="Ureta-Vidal A."/>
            <person name="Woodwark C."/>
            <person name="Zdobnov E."/>
            <person name="Bork P."/>
            <person name="Suyama M."/>
            <person name="Torrents D."/>
            <person name="Alexandersson M."/>
            <person name="Trask B.J."/>
            <person name="Young J.M."/>
            <person name="Huang H."/>
            <person name="Wang H."/>
            <person name="Xing H."/>
            <person name="Daniels S."/>
            <person name="Gietzen D."/>
            <person name="Schmidt J."/>
            <person name="Stevens K."/>
            <person name="Vitt U."/>
            <person name="Wingrove J."/>
            <person name="Camara F."/>
            <person name="Mar Alba M."/>
            <person name="Abril J.F."/>
            <person name="Guigo R."/>
            <person name="Smit A."/>
            <person name="Dubchak I."/>
            <person name="Rubin E.M."/>
            <person name="Couronne O."/>
            <person name="Poliakov A."/>
            <person name="Huebner N."/>
            <person name="Ganten D."/>
            <person name="Goesele C."/>
            <person name="Hummel O."/>
            <person name="Kreitler T."/>
            <person name="Lee Y.-A."/>
            <person name="Monti J."/>
            <person name="Schulz H."/>
            <person name="Zimdahl H."/>
            <person name="Himmelbauer H."/>
            <person name="Lehrach H."/>
            <person name="Jacob H.J."/>
            <person name="Bromberg S."/>
            <person name="Gullings-Handley J."/>
            <person name="Jensen-Seaman M.I."/>
            <person name="Kwitek A.E."/>
            <person name="Lazar J."/>
            <person name="Pasko D."/>
            <person name="Tonellato P.J."/>
            <person name="Twigger S."/>
            <person name="Ponting C.P."/>
            <person name="Duarte J.M."/>
            <person name="Rice S."/>
            <person name="Goodstadt L."/>
            <person name="Beatson S.A."/>
            <person name="Emes R.D."/>
            <person name="Winter E.E."/>
            <person name="Webber C."/>
            <person name="Brandt P."/>
            <person name="Nyakatura G."/>
            <person name="Adetobi M."/>
            <person name="Chiaromonte F."/>
            <person name="Elnitski L."/>
            <person name="Eswara P."/>
            <person name="Hardison R.C."/>
            <person name="Hou M."/>
            <person name="Kolbe D."/>
            <person name="Makova K."/>
            <person name="Miller W."/>
            <person name="Nekrutenko A."/>
            <person name="Riemer C."/>
            <person name="Schwartz S."/>
            <person name="Taylor J."/>
            <person name="Yang S."/>
            <person name="Zhang Y."/>
            <person name="Lindpaintner K."/>
            <person name="Andrews T.D."/>
            <person name="Caccamo M."/>
            <person name="Clamp M."/>
            <person name="Clarke L."/>
            <person name="Curwen V."/>
            <person name="Durbin R.M."/>
            <person name="Eyras E."/>
            <person name="Searle S.M."/>
            <person name="Cooper G.M."/>
            <person name="Batzoglou S."/>
            <person name="Brudno M."/>
            <person name="Sidow A."/>
            <person name="Stone E.A."/>
            <person name="Payseur B.A."/>
            <person name="Bourque G."/>
            <person name="Lopez-Otin C."/>
            <person name="Puente X.S."/>
            <person name="Chakrabarti K."/>
            <person name="Chatterji S."/>
            <person name="Dewey C."/>
            <person name="Pachter L."/>
            <person name="Bray N."/>
            <person name="Yap V.B."/>
            <person name="Caspi A."/>
            <person name="Tesler G."/>
            <person name="Pevzner P.A."/>
            <person name="Haussler D."/>
            <person name="Roskin K.M."/>
            <person name="Baertsch R."/>
            <person name="Clawson H."/>
            <person name="Furey T.S."/>
            <person name="Hinrichs A.S."/>
            <person name="Karolchik D."/>
            <person name="Kent W.J."/>
            <person name="Rosenbloom K.R."/>
            <person name="Trumbower H."/>
            <person name="Weirauch M."/>
            <person name="Cooper D.N."/>
            <person name="Stenson P.D."/>
            <person name="Ma B."/>
            <person name="Brent M."/>
            <person name="Arumugam M."/>
            <person name="Shteynberg D."/>
            <person name="Copley R.R."/>
            <person name="Taylor M.S."/>
            <person name="Riethman H."/>
            <person name="Mudunuri U."/>
            <person name="Peterson J."/>
            <person name="Guyer M."/>
            <person name="Felsenfeld A."/>
            <person name="Old S."/>
            <person name="Mockrin S."/>
            <person name="Collins F.S."/>
        </authorList>
    </citation>
    <scope>NUCLEOTIDE SEQUENCE [LARGE SCALE GENOMIC DNA]</scope>
    <source>
        <strain>Brown Norway</strain>
    </source>
</reference>
<reference key="2">
    <citation type="submission" date="2005-07" db="EMBL/GenBank/DDBJ databases">
        <authorList>
            <person name="Mural R.J."/>
            <person name="Adams M.D."/>
            <person name="Myers E.W."/>
            <person name="Smith H.O."/>
            <person name="Venter J.C."/>
        </authorList>
    </citation>
    <scope>NUCLEOTIDE SEQUENCE [LARGE SCALE GENOMIC DNA]</scope>
    <source>
        <strain>Brown Norway</strain>
    </source>
</reference>
<comment type="function">
    <text evidence="1">Component of the Fanconi anemia (FA) complex required to recruit the FA complex to DNA interstrand cross-links (ICLs) and promote ICLs repair. Following DNA damage recognizes and binds 'Lys-63'-linked ubiquitin generated by RNF8 at ICLs and recruits other components of the FA complex. Promotes translesion synthesis via interaction with REV1 (By similarity).</text>
</comment>
<comment type="subunit">
    <text evidence="1">Component of the Fanconi anemia (FA) complex. Interacts with FANCA; interaction is direct. Interacts with REV1 (By similarity).</text>
</comment>
<comment type="subcellular location">
    <subcellularLocation>
        <location evidence="2">Nucleus</location>
    </subcellularLocation>
    <subcellularLocation>
        <location evidence="2">Chromosome</location>
    </subcellularLocation>
    <text evidence="2">Following DNA damage, recruited to DNA interstrand cross-links (ICLs) sites by binding to ubiquitin generated by RNF8.</text>
</comment>
<comment type="domain">
    <text evidence="3">The UBZ2-type zinc finger binds both 'Lys-48'- and 'Lys-63'-linked polyubiquitin with preference for 'Lys-63'-linked polyubiquitin.</text>
</comment>
<name>FAP20_RAT</name>
<gene>
    <name evidence="2" type="primary">Faap20</name>
</gene>
<sequence>MEEERRLRGRLSRRRPPAGGGPPNCRPWFLSEESKSEPWAALLRSTVGGNTDWTPNSQPLPPLPAFPSQESLPDPESTVPPEVFTVGSKTFSWTPFPPALRGSGSSCRLLRCPEGSPGSPAPSLKGCPALDSRQTPSTQECVQSQLVLLNCPLCQKAFDPKLTQLDVDSHLAQCLAESTEDVVW</sequence>
<proteinExistence type="inferred from homology"/>
<feature type="chain" id="PRO_0000419699" description="Fanconi anemia core complex-associated protein 20">
    <location>
        <begin position="1"/>
        <end position="184"/>
    </location>
</feature>
<feature type="zinc finger region" description="UBZ2-type" evidence="3">
    <location>
        <begin position="148"/>
        <end position="184"/>
    </location>
</feature>
<feature type="region of interest" description="Disordered" evidence="4">
    <location>
        <begin position="1"/>
        <end position="30"/>
    </location>
</feature>
<feature type="region of interest" description="Disordered" evidence="4">
    <location>
        <begin position="46"/>
        <end position="81"/>
    </location>
</feature>
<feature type="compositionally biased region" description="Basic residues" evidence="4">
    <location>
        <begin position="7"/>
        <end position="16"/>
    </location>
</feature>
<feature type="compositionally biased region" description="Polar residues" evidence="4">
    <location>
        <begin position="47"/>
        <end position="57"/>
    </location>
</feature>
<feature type="binding site" evidence="3">
    <location>
        <position position="151"/>
    </location>
    <ligand>
        <name>Zn(2+)</name>
        <dbReference type="ChEBI" id="CHEBI:29105"/>
    </ligand>
</feature>
<feature type="binding site" evidence="3">
    <location>
        <position position="154"/>
    </location>
    <ligand>
        <name>Zn(2+)</name>
        <dbReference type="ChEBI" id="CHEBI:29105"/>
    </ligand>
</feature>
<feature type="binding site" evidence="3">
    <location>
        <position position="170"/>
    </location>
    <ligand>
        <name>Zn(2+)</name>
        <dbReference type="ChEBI" id="CHEBI:29105"/>
    </ligand>
</feature>
<feature type="binding site" evidence="3">
    <location>
        <position position="174"/>
    </location>
    <ligand>
        <name>Zn(2+)</name>
        <dbReference type="ChEBI" id="CHEBI:29105"/>
    </ligand>
</feature>
<feature type="modified residue" description="Phosphoserine" evidence="2">
    <location>
        <position position="119"/>
    </location>
</feature>
<organism>
    <name type="scientific">Rattus norvegicus</name>
    <name type="common">Rat</name>
    <dbReference type="NCBI Taxonomy" id="10116"/>
    <lineage>
        <taxon>Eukaryota</taxon>
        <taxon>Metazoa</taxon>
        <taxon>Chordata</taxon>
        <taxon>Craniata</taxon>
        <taxon>Vertebrata</taxon>
        <taxon>Euteleostomi</taxon>
        <taxon>Mammalia</taxon>
        <taxon>Eutheria</taxon>
        <taxon>Euarchontoglires</taxon>
        <taxon>Glires</taxon>
        <taxon>Rodentia</taxon>
        <taxon>Myomorpha</taxon>
        <taxon>Muroidea</taxon>
        <taxon>Muridae</taxon>
        <taxon>Murinae</taxon>
        <taxon>Rattus</taxon>
    </lineage>
</organism>